<reference key="1">
    <citation type="submission" date="2006-06" db="EMBL/GenBank/DDBJ databases">
        <title>Complete sequence of chromosome of Mycobacterium sp. MCS.</title>
        <authorList>
            <consortium name="US DOE Joint Genome Institute"/>
            <person name="Copeland A."/>
            <person name="Lucas S."/>
            <person name="Lapidus A."/>
            <person name="Barry K."/>
            <person name="Detter J.C."/>
            <person name="Glavina del Rio T."/>
            <person name="Hammon N."/>
            <person name="Israni S."/>
            <person name="Dalin E."/>
            <person name="Tice H."/>
            <person name="Pitluck S."/>
            <person name="Martinez M."/>
            <person name="Schmutz J."/>
            <person name="Larimer F."/>
            <person name="Land M."/>
            <person name="Hauser L."/>
            <person name="Kyrpides N."/>
            <person name="Kim E."/>
            <person name="Miller C.D."/>
            <person name="Hughes J.E."/>
            <person name="Anderson A.J."/>
            <person name="Sims R.C."/>
            <person name="Richardson P."/>
        </authorList>
    </citation>
    <scope>NUCLEOTIDE SEQUENCE [LARGE SCALE GENOMIC DNA]</scope>
    <source>
        <strain>MCS</strain>
    </source>
</reference>
<protein>
    <recommendedName>
        <fullName evidence="1">Bifunctional purine biosynthesis protein PurH</fullName>
    </recommendedName>
    <domain>
        <recommendedName>
            <fullName evidence="1">Phosphoribosylaminoimidazolecarboxamide formyltransferase</fullName>
            <ecNumber evidence="1">2.1.2.3</ecNumber>
        </recommendedName>
        <alternativeName>
            <fullName evidence="1">AICAR transformylase</fullName>
        </alternativeName>
    </domain>
    <domain>
        <recommendedName>
            <fullName evidence="1">IMP cyclohydrolase</fullName>
            <ecNumber evidence="1">3.5.4.10</ecNumber>
        </recommendedName>
        <alternativeName>
            <fullName evidence="1">ATIC</fullName>
        </alternativeName>
        <alternativeName>
            <fullName evidence="1">IMP synthase</fullName>
        </alternativeName>
        <alternativeName>
            <fullName evidence="1">Inosinicase</fullName>
        </alternativeName>
    </domain>
</protein>
<organism>
    <name type="scientific">Mycobacterium sp. (strain MCS)</name>
    <dbReference type="NCBI Taxonomy" id="164756"/>
    <lineage>
        <taxon>Bacteria</taxon>
        <taxon>Bacillati</taxon>
        <taxon>Actinomycetota</taxon>
        <taxon>Actinomycetes</taxon>
        <taxon>Mycobacteriales</taxon>
        <taxon>Mycobacteriaceae</taxon>
        <taxon>Mycobacterium</taxon>
    </lineage>
</organism>
<keyword id="KW-0378">Hydrolase</keyword>
<keyword id="KW-0511">Multifunctional enzyme</keyword>
<keyword id="KW-0658">Purine biosynthesis</keyword>
<keyword id="KW-0808">Transferase</keyword>
<feature type="chain" id="PRO_1000018913" description="Bifunctional purine biosynthesis protein PurH">
    <location>
        <begin position="1"/>
        <end position="527"/>
    </location>
</feature>
<feature type="domain" description="MGS-like" evidence="2">
    <location>
        <begin position="8"/>
        <end position="156"/>
    </location>
</feature>
<gene>
    <name evidence="1" type="primary">purH</name>
    <name type="ordered locus">Mmcs_4319</name>
</gene>
<comment type="catalytic activity">
    <reaction evidence="1">
        <text>(6R)-10-formyltetrahydrofolate + 5-amino-1-(5-phospho-beta-D-ribosyl)imidazole-4-carboxamide = 5-formamido-1-(5-phospho-D-ribosyl)imidazole-4-carboxamide + (6S)-5,6,7,8-tetrahydrofolate</text>
        <dbReference type="Rhea" id="RHEA:22192"/>
        <dbReference type="ChEBI" id="CHEBI:57453"/>
        <dbReference type="ChEBI" id="CHEBI:58467"/>
        <dbReference type="ChEBI" id="CHEBI:58475"/>
        <dbReference type="ChEBI" id="CHEBI:195366"/>
        <dbReference type="EC" id="2.1.2.3"/>
    </reaction>
</comment>
<comment type="catalytic activity">
    <reaction evidence="1">
        <text>IMP + H2O = 5-formamido-1-(5-phospho-D-ribosyl)imidazole-4-carboxamide</text>
        <dbReference type="Rhea" id="RHEA:18445"/>
        <dbReference type="ChEBI" id="CHEBI:15377"/>
        <dbReference type="ChEBI" id="CHEBI:58053"/>
        <dbReference type="ChEBI" id="CHEBI:58467"/>
        <dbReference type="EC" id="3.5.4.10"/>
    </reaction>
</comment>
<comment type="pathway">
    <text evidence="1">Purine metabolism; IMP biosynthesis via de novo pathway; 5-formamido-1-(5-phospho-D-ribosyl)imidazole-4-carboxamide from 5-amino-1-(5-phospho-D-ribosyl)imidazole-4-carboxamide (10-formyl THF route): step 1/1.</text>
</comment>
<comment type="pathway">
    <text evidence="1">Purine metabolism; IMP biosynthesis via de novo pathway; IMP from 5-formamido-1-(5-phospho-D-ribosyl)imidazole-4-carboxamide: step 1/1.</text>
</comment>
<comment type="domain">
    <text evidence="1">The IMP cyclohydrolase activity resides in the N-terminal region.</text>
</comment>
<comment type="similarity">
    <text evidence="1">Belongs to the PurH family.</text>
</comment>
<sequence length="527" mass="55533">MSGDQGQAGAKRPIRRALISVYDKTGLIDLARGLHEAGVDIVSTGSTAKTIADKGIPVTPVEFVTGFPEVLDGRVKTLHPHIHAGLLADTRKPEHVEALAKLGIAPFDLVVVNLYPFSETVESGASVDECVEQIDIGGPSMVRAAAKNHPSVAVVVEPNGYDGVLAAVRTGGFTLAERKILASLAFRHTAEYDVAVASWMGSTLAPEEPAQKLPAWVGGTWRRAAVLRYGENPHQQAALYRDATAWPGLAQAEQLHGKEMSYNNYTDADAAWRAAFDHEEICVAIIKHANPCGIAISSVSVADAHRKAHECDPLSAFGGVIATNSSVSVEMAETVADIFTEVIVAPAYEPGAVEILSRKKNIRILVAAQPPTTGTELRPISGGLLLQQRDALDADGDDPVNWTLATGEPADPATLANLKFAWRSCRAVKSNAIVVVADGATVGVGMGQVNRVDAARLAVQRAGDRVRGAVAASDAFFPFPDGLETLTEAGVKAIVHPGGSMRDDVVTEAAAKAGISLYLTGARHFAH</sequence>
<proteinExistence type="inferred from homology"/>
<dbReference type="EC" id="2.1.2.3" evidence="1"/>
<dbReference type="EC" id="3.5.4.10" evidence="1"/>
<dbReference type="EMBL" id="CP000384">
    <property type="protein sequence ID" value="ABG10424.1"/>
    <property type="molecule type" value="Genomic_DNA"/>
</dbReference>
<dbReference type="SMR" id="Q1B3W0"/>
<dbReference type="KEGG" id="mmc:Mmcs_4319"/>
<dbReference type="HOGENOM" id="CLU_016316_5_2_11"/>
<dbReference type="BioCyc" id="MSP164756:G1G6O-4412-MONOMER"/>
<dbReference type="UniPathway" id="UPA00074">
    <property type="reaction ID" value="UER00133"/>
</dbReference>
<dbReference type="UniPathway" id="UPA00074">
    <property type="reaction ID" value="UER00135"/>
</dbReference>
<dbReference type="GO" id="GO:0005829">
    <property type="term" value="C:cytosol"/>
    <property type="evidence" value="ECO:0007669"/>
    <property type="project" value="TreeGrafter"/>
</dbReference>
<dbReference type="GO" id="GO:0003937">
    <property type="term" value="F:IMP cyclohydrolase activity"/>
    <property type="evidence" value="ECO:0007669"/>
    <property type="project" value="UniProtKB-UniRule"/>
</dbReference>
<dbReference type="GO" id="GO:0004643">
    <property type="term" value="F:phosphoribosylaminoimidazolecarboxamide formyltransferase activity"/>
    <property type="evidence" value="ECO:0007669"/>
    <property type="project" value="UniProtKB-UniRule"/>
</dbReference>
<dbReference type="GO" id="GO:0006189">
    <property type="term" value="P:'de novo' IMP biosynthetic process"/>
    <property type="evidence" value="ECO:0007669"/>
    <property type="project" value="UniProtKB-UniRule"/>
</dbReference>
<dbReference type="CDD" id="cd01421">
    <property type="entry name" value="IMPCH"/>
    <property type="match status" value="1"/>
</dbReference>
<dbReference type="FunFam" id="3.40.140.20:FF:000001">
    <property type="entry name" value="Bifunctional purine biosynthesis protein PurH"/>
    <property type="match status" value="1"/>
</dbReference>
<dbReference type="FunFam" id="3.40.140.20:FF:000002">
    <property type="entry name" value="Bifunctional purine biosynthesis protein PurH"/>
    <property type="match status" value="1"/>
</dbReference>
<dbReference type="FunFam" id="3.40.50.1380:FF:000001">
    <property type="entry name" value="Bifunctional purine biosynthesis protein PurH"/>
    <property type="match status" value="1"/>
</dbReference>
<dbReference type="Gene3D" id="3.40.140.20">
    <property type="match status" value="2"/>
</dbReference>
<dbReference type="Gene3D" id="3.40.50.1380">
    <property type="entry name" value="Methylglyoxal synthase-like domain"/>
    <property type="match status" value="1"/>
</dbReference>
<dbReference type="HAMAP" id="MF_00139">
    <property type="entry name" value="PurH"/>
    <property type="match status" value="1"/>
</dbReference>
<dbReference type="InterPro" id="IPR024051">
    <property type="entry name" value="AICAR_Tfase_dup_dom_sf"/>
</dbReference>
<dbReference type="InterPro" id="IPR016193">
    <property type="entry name" value="Cytidine_deaminase-like"/>
</dbReference>
<dbReference type="InterPro" id="IPR011607">
    <property type="entry name" value="MGS-like_dom"/>
</dbReference>
<dbReference type="InterPro" id="IPR036914">
    <property type="entry name" value="MGS-like_dom_sf"/>
</dbReference>
<dbReference type="InterPro" id="IPR002695">
    <property type="entry name" value="PurH-like"/>
</dbReference>
<dbReference type="NCBIfam" id="NF002049">
    <property type="entry name" value="PRK00881.1"/>
    <property type="match status" value="1"/>
</dbReference>
<dbReference type="NCBIfam" id="TIGR00355">
    <property type="entry name" value="purH"/>
    <property type="match status" value="1"/>
</dbReference>
<dbReference type="PANTHER" id="PTHR11692:SF0">
    <property type="entry name" value="BIFUNCTIONAL PURINE BIOSYNTHESIS PROTEIN ATIC"/>
    <property type="match status" value="1"/>
</dbReference>
<dbReference type="PANTHER" id="PTHR11692">
    <property type="entry name" value="BIFUNCTIONAL PURINE BIOSYNTHESIS PROTEIN PURH"/>
    <property type="match status" value="1"/>
</dbReference>
<dbReference type="Pfam" id="PF01808">
    <property type="entry name" value="AICARFT_IMPCHas"/>
    <property type="match status" value="1"/>
</dbReference>
<dbReference type="Pfam" id="PF02142">
    <property type="entry name" value="MGS"/>
    <property type="match status" value="1"/>
</dbReference>
<dbReference type="PIRSF" id="PIRSF000414">
    <property type="entry name" value="AICARFT_IMPCHas"/>
    <property type="match status" value="1"/>
</dbReference>
<dbReference type="SMART" id="SM00798">
    <property type="entry name" value="AICARFT_IMPCHas"/>
    <property type="match status" value="1"/>
</dbReference>
<dbReference type="SMART" id="SM00851">
    <property type="entry name" value="MGS"/>
    <property type="match status" value="1"/>
</dbReference>
<dbReference type="SUPFAM" id="SSF53927">
    <property type="entry name" value="Cytidine deaminase-like"/>
    <property type="match status" value="1"/>
</dbReference>
<dbReference type="SUPFAM" id="SSF52335">
    <property type="entry name" value="Methylglyoxal synthase-like"/>
    <property type="match status" value="1"/>
</dbReference>
<dbReference type="PROSITE" id="PS51855">
    <property type="entry name" value="MGS"/>
    <property type="match status" value="1"/>
</dbReference>
<name>PUR9_MYCSS</name>
<accession>Q1B3W0</accession>
<evidence type="ECO:0000255" key="1">
    <source>
        <dbReference type="HAMAP-Rule" id="MF_00139"/>
    </source>
</evidence>
<evidence type="ECO:0000255" key="2">
    <source>
        <dbReference type="PROSITE-ProRule" id="PRU01202"/>
    </source>
</evidence>